<sequence>MMNKGIVMDIKKHSVVVLTPNGEFITCKRKGDSCMIGEEISFDEQEQKASRFSIPYFLKPASLLVACFLCALLFFYNQPEEKVFAYVSVDINPSLEVSVTKDLRVIDLQACNDDGRRILKELKQWENKQLQEVIRTIIKQSQEDKYLTNDKQVMLTAIAKDKLLEPKLEKVMKELKKEYELKHITVEYQSSTMQVRENAIKAGIGTGVYIKQENEKNKSVTPPATPSNPVENEEERQSQPDSSPDVVPDLSSVKDKKYEKPEYKEQKKIEEQPTKQIKENNGRGSQQENRGNQQENNGRESQQGNNGNQQGNNGRESQQGNNGNQQGNNGRGSQGNNGHQQENNGRGSQGNNGNQQGNNGRGSQGNNGHQQENNGRGSQGNNGNQQGDNGRGSQQGNNGNQQGDNGRGSQKENVGNEQGNNGRGSQQENRGHQQGNEKKNQ</sequence>
<name>RSGI_BACAN</name>
<dbReference type="EMBL" id="AE017225">
    <property type="protein sequence ID" value="AAT55538.1"/>
    <property type="molecule type" value="Genomic_DNA"/>
</dbReference>
<dbReference type="RefSeq" id="WP_000981248.1">
    <property type="nucleotide sequence ID" value="NZ_WXXJ01000014.1"/>
</dbReference>
<dbReference type="RefSeq" id="YP_029487.1">
    <property type="nucleotide sequence ID" value="NC_005945.1"/>
</dbReference>
<dbReference type="SMR" id="P0DO99"/>
<dbReference type="STRING" id="261594.GBAA_3482"/>
<dbReference type="GeneID" id="45023229"/>
<dbReference type="KEGG" id="bat:BAS3230"/>
<dbReference type="PATRIC" id="fig|260799.14.peg.3460"/>
<dbReference type="eggNOG" id="ENOG5032YNU">
    <property type="taxonomic scope" value="Bacteria"/>
</dbReference>
<dbReference type="OrthoDB" id="9800626at2"/>
<dbReference type="GO" id="GO:0005886">
    <property type="term" value="C:plasma membrane"/>
    <property type="evidence" value="ECO:0007669"/>
    <property type="project" value="UniProtKB-SubCell"/>
</dbReference>
<dbReference type="InterPro" id="IPR024449">
    <property type="entry name" value="Anti-sigma_RsgI_N"/>
</dbReference>
<dbReference type="InterPro" id="IPR055431">
    <property type="entry name" value="RsgI_M"/>
</dbReference>
<dbReference type="PANTHER" id="PTHR24637:SF417">
    <property type="entry name" value="COL_CUTICLE_N DOMAIN-CONTAINING PROTEIN"/>
    <property type="match status" value="1"/>
</dbReference>
<dbReference type="PANTHER" id="PTHR24637">
    <property type="entry name" value="COLLAGEN"/>
    <property type="match status" value="1"/>
</dbReference>
<dbReference type="Pfam" id="PF23750">
    <property type="entry name" value="RsgI_M"/>
    <property type="match status" value="1"/>
</dbReference>
<dbReference type="Pfam" id="PF12791">
    <property type="entry name" value="RsgI_N"/>
    <property type="match status" value="1"/>
</dbReference>
<dbReference type="PROSITE" id="PS51849">
    <property type="entry name" value="RSGI_N"/>
    <property type="match status" value="1"/>
</dbReference>
<organism>
    <name type="scientific">Bacillus anthracis</name>
    <dbReference type="NCBI Taxonomy" id="1392"/>
    <lineage>
        <taxon>Bacteria</taxon>
        <taxon>Bacillati</taxon>
        <taxon>Bacillota</taxon>
        <taxon>Bacilli</taxon>
        <taxon>Bacillales</taxon>
        <taxon>Bacillaceae</taxon>
        <taxon>Bacillus</taxon>
        <taxon>Bacillus cereus group</taxon>
    </lineage>
</organism>
<accession>P0DO99</accession>
<evidence type="ECO:0000255" key="1"/>
<evidence type="ECO:0000255" key="2">
    <source>
        <dbReference type="PROSITE-ProRule" id="PRU01196"/>
    </source>
</evidence>
<evidence type="ECO:0000256" key="3">
    <source>
        <dbReference type="SAM" id="MobiDB-lite"/>
    </source>
</evidence>
<evidence type="ECO:0000269" key="4">
    <source>
    </source>
</evidence>
<evidence type="ECO:0000303" key="5">
    <source>
    </source>
</evidence>
<evidence type="ECO:0000305" key="6"/>
<evidence type="ECO:0000312" key="7">
    <source>
        <dbReference type="EMBL" id="AAT55538.1"/>
    </source>
</evidence>
<proteinExistence type="evidence at transcript level"/>
<protein>
    <recommendedName>
        <fullName evidence="6">Anti-sigma-I factor RsgI</fullName>
    </recommendedName>
</protein>
<comment type="function">
    <text evidence="4">Anti-sigma factor for SigI. Negatively regulates SigI activity through direct interaction. Has no direct effect on virulence gene expression.</text>
</comment>
<comment type="subunit">
    <text evidence="2">Interacts (via RsgI N-terminal anti-sigma domain) with SigI.</text>
</comment>
<comment type="subcellular location">
    <subcellularLocation>
        <location evidence="6">Cell membrane</location>
        <topology evidence="1">Single-pass membrane protein</topology>
    </subcellularLocation>
</comment>
<comment type="induction">
    <text evidence="4">Part of the sigI-rsgI operon, which is induced by heat shock.</text>
</comment>
<comment type="disruption phenotype">
    <text evidence="4">Loss of rsgI results in a strong increase in sigI promoter activity in both the exponential and stationary phases.</text>
</comment>
<gene>
    <name evidence="5" type="primary">rsgI</name>
    <name evidence="7" type="ordered locus">BAS3230</name>
</gene>
<keyword id="KW-1003">Cell membrane</keyword>
<keyword id="KW-0472">Membrane</keyword>
<keyword id="KW-0346">Stress response</keyword>
<keyword id="KW-0812">Transmembrane</keyword>
<keyword id="KW-1133">Transmembrane helix</keyword>
<reference key="1">
    <citation type="submission" date="2004-01" db="EMBL/GenBank/DDBJ databases">
        <title>Complete genome sequence of Bacillus anthracis Sterne.</title>
        <authorList>
            <person name="Brettin T.S."/>
            <person name="Bruce D."/>
            <person name="Challacombe J.F."/>
            <person name="Gilna P."/>
            <person name="Han C."/>
            <person name="Hill K."/>
            <person name="Hitchcock P."/>
            <person name="Jackson P."/>
            <person name="Keim P."/>
            <person name="Longmire J."/>
            <person name="Lucas S."/>
            <person name="Okinaka R."/>
            <person name="Richardson P."/>
            <person name="Rubin E."/>
            <person name="Tice H."/>
        </authorList>
    </citation>
    <scope>NUCLEOTIDE SEQUENCE [LARGE SCALE GENOMIC DNA]</scope>
    <source>
        <strain>Sterne</strain>
    </source>
</reference>
<reference key="2">
    <citation type="journal article" date="2016" name="Microbiology">
        <title>Loss of sigmaI affects heat-shock response and virulence gene expression in Bacillus anthracis.</title>
        <authorList>
            <person name="Kim J.G."/>
            <person name="Wilson A.C."/>
        </authorList>
    </citation>
    <scope>FUNCTION</scope>
    <scope>INDUCTION</scope>
    <scope>DISRUPTION PHENOTYPE</scope>
    <source>
        <strain>Sterne</strain>
    </source>
</reference>
<feature type="chain" id="PRO_0000436481" description="Anti-sigma-I factor RsgI">
    <location>
        <begin position="1"/>
        <end position="441"/>
    </location>
</feature>
<feature type="topological domain" description="Cytoplasmic" evidence="6">
    <location>
        <begin position="1"/>
        <end position="53"/>
    </location>
</feature>
<feature type="transmembrane region" description="Helical" evidence="1">
    <location>
        <begin position="54"/>
        <end position="76"/>
    </location>
</feature>
<feature type="topological domain" description="Extracellular" evidence="6">
    <location>
        <begin position="77"/>
        <end position="441"/>
    </location>
</feature>
<feature type="domain" description="RsgI N-terminal anti-sigma" evidence="2">
    <location>
        <begin position="3"/>
        <end position="51"/>
    </location>
</feature>
<feature type="region of interest" description="Disordered" evidence="3">
    <location>
        <begin position="213"/>
        <end position="441"/>
    </location>
</feature>
<feature type="compositionally biased region" description="Polar residues" evidence="3">
    <location>
        <begin position="219"/>
        <end position="230"/>
    </location>
</feature>
<feature type="compositionally biased region" description="Low complexity" evidence="3">
    <location>
        <begin position="240"/>
        <end position="251"/>
    </location>
</feature>
<feature type="compositionally biased region" description="Basic and acidic residues" evidence="3">
    <location>
        <begin position="252"/>
        <end position="281"/>
    </location>
</feature>
<feature type="compositionally biased region" description="Low complexity" evidence="3">
    <location>
        <begin position="282"/>
        <end position="328"/>
    </location>
</feature>
<feature type="compositionally biased region" description="Low complexity" evidence="3">
    <location>
        <begin position="336"/>
        <end position="358"/>
    </location>
</feature>
<feature type="compositionally biased region" description="Low complexity" evidence="3">
    <location>
        <begin position="366"/>
        <end position="408"/>
    </location>
</feature>
<feature type="compositionally biased region" description="Polar residues" evidence="3">
    <location>
        <begin position="411"/>
        <end position="428"/>
    </location>
</feature>
<feature type="compositionally biased region" description="Basic and acidic residues" evidence="3">
    <location>
        <begin position="429"/>
        <end position="441"/>
    </location>
</feature>